<evidence type="ECO:0000250" key="1">
    <source>
        <dbReference type="UniProtKB" id="Q96242"/>
    </source>
</evidence>
<evidence type="ECO:0000255" key="2"/>
<evidence type="ECO:0000269" key="3">
    <source>
    </source>
</evidence>
<evidence type="ECO:0000303" key="4">
    <source>
    </source>
</evidence>
<evidence type="ECO:0000303" key="5">
    <source>
    </source>
</evidence>
<evidence type="ECO:0000305" key="6"/>
<evidence type="ECO:0000305" key="7">
    <source>
    </source>
</evidence>
<evidence type="ECO:0000312" key="8">
    <source>
        <dbReference type="EMBL" id="ONM27923.1"/>
    </source>
</evidence>
<keyword id="KW-0349">Heme</keyword>
<keyword id="KW-0408">Iron</keyword>
<keyword id="KW-0472">Membrane</keyword>
<keyword id="KW-0479">Metal-binding</keyword>
<keyword id="KW-0503">Monooxygenase</keyword>
<keyword id="KW-0560">Oxidoreductase</keyword>
<keyword id="KW-1185">Reference proteome</keyword>
<keyword id="KW-0812">Transmembrane</keyword>
<keyword id="KW-1133">Transmembrane helix</keyword>
<gene>
    <name evidence="4" type="primary">CYP92C6</name>
    <name evidence="8" type="ORF">ZEAMMB73_Zm00001d007918</name>
</gene>
<feature type="chain" id="PRO_0000447525" description="Trimethyltridecatetraene synthase">
    <location>
        <begin position="1"/>
        <end position="554"/>
    </location>
</feature>
<feature type="transmembrane region" description="Helical" evidence="2">
    <location>
        <begin position="1"/>
        <end position="21"/>
    </location>
</feature>
<feature type="binding site" description="axial binding residue" evidence="1">
    <location>
        <position position="464"/>
    </location>
    <ligand>
        <name>heme</name>
        <dbReference type="ChEBI" id="CHEBI:30413"/>
    </ligand>
    <ligandPart>
        <name>Fe</name>
        <dbReference type="ChEBI" id="CHEBI:18248"/>
    </ligandPart>
</feature>
<accession>A0A1D6F9Y9</accession>
<accession>B4FSZ6</accession>
<accession>B8A110</accession>
<sequence length="554" mass="60524">MSAAVALAVILAVYVVLRYISSPRGRSKPLNLPPGPRGWPVIGSLGALAGALPPHRALAALAARHGPLMHLRLGSYHAVVASSADTARLVLKVHDLAFADRPRTAAGEVASYGYLGIVHTPYGAYWRMARKLCATELFSARRVDSFERVRAQEMRALARGLFECAGRGAVAVREHVAGATLRNILRMAVGEKWSGCYGSPEGEAFRRTLDEAFAVTGAVSNVGEWVPWLGWLDLQGCVRRMKRLRAQYDRFFEQILDDHDHKKTRRERGRPGAGDSAADDDLVDVLLRLVEEDEDRPETTEASRLTRDGVKAFVQDIVAGGTESSAVTIEWAMSELLRRPDALRAATAELDRVIGHGRWVTERDLPDLPYIDAVVKETMRLHPVGPLLVPHHAREHTVVAGYDVPAGARVLVNVWAIARDPASWPDAPDAFRPERFLNGSSGASVDVRGAHFELLPFGAGRRMCPAHGLAMKLVTAGVANLVHGFAWRLPDGMAPEDVSMEELFGLSTRRKVPLVAVAEPRLPAHLYTNVTPPQQVAGSTIANLSTRPEYKLVF</sequence>
<organism>
    <name type="scientific">Zea mays</name>
    <name type="common">Maize</name>
    <dbReference type="NCBI Taxonomy" id="4577"/>
    <lineage>
        <taxon>Eukaryota</taxon>
        <taxon>Viridiplantae</taxon>
        <taxon>Streptophyta</taxon>
        <taxon>Embryophyta</taxon>
        <taxon>Tracheophyta</taxon>
        <taxon>Spermatophyta</taxon>
        <taxon>Magnoliopsida</taxon>
        <taxon>Liliopsida</taxon>
        <taxon>Poales</taxon>
        <taxon>Poaceae</taxon>
        <taxon>PACMAD clade</taxon>
        <taxon>Panicoideae</taxon>
        <taxon>Andropogonodae</taxon>
        <taxon>Andropogoneae</taxon>
        <taxon>Tripsacinae</taxon>
        <taxon>Zea</taxon>
    </lineage>
</organism>
<reference key="1">
    <citation type="journal article" date="2009" name="Science">
        <title>The B73 maize genome: complexity, diversity, and dynamics.</title>
        <authorList>
            <person name="Schnable P.S."/>
            <person name="Ware D."/>
            <person name="Fulton R.S."/>
            <person name="Stein J.C."/>
            <person name="Wei F."/>
            <person name="Pasternak S."/>
            <person name="Liang C."/>
            <person name="Zhang J."/>
            <person name="Fulton L."/>
            <person name="Graves T.A."/>
            <person name="Minx P."/>
            <person name="Reily A.D."/>
            <person name="Courtney L."/>
            <person name="Kruchowski S.S."/>
            <person name="Tomlinson C."/>
            <person name="Strong C."/>
            <person name="Delehaunty K."/>
            <person name="Fronick C."/>
            <person name="Courtney B."/>
            <person name="Rock S.M."/>
            <person name="Belter E."/>
            <person name="Du F."/>
            <person name="Kim K."/>
            <person name="Abbott R.M."/>
            <person name="Cotton M."/>
            <person name="Levy A."/>
            <person name="Marchetto P."/>
            <person name="Ochoa K."/>
            <person name="Jackson S.M."/>
            <person name="Gillam B."/>
            <person name="Chen W."/>
            <person name="Yan L."/>
            <person name="Higginbotham J."/>
            <person name="Cardenas M."/>
            <person name="Waligorski J."/>
            <person name="Applebaum E."/>
            <person name="Phelps L."/>
            <person name="Falcone J."/>
            <person name="Kanchi K."/>
            <person name="Thane T."/>
            <person name="Scimone A."/>
            <person name="Thane N."/>
            <person name="Henke J."/>
            <person name="Wang T."/>
            <person name="Ruppert J."/>
            <person name="Shah N."/>
            <person name="Rotter K."/>
            <person name="Hodges J."/>
            <person name="Ingenthron E."/>
            <person name="Cordes M."/>
            <person name="Kohlberg S."/>
            <person name="Sgro J."/>
            <person name="Delgado B."/>
            <person name="Mead K."/>
            <person name="Chinwalla A."/>
            <person name="Leonard S."/>
            <person name="Crouse K."/>
            <person name="Collura K."/>
            <person name="Kudrna D."/>
            <person name="Currie J."/>
            <person name="He R."/>
            <person name="Angelova A."/>
            <person name="Rajasekar S."/>
            <person name="Mueller T."/>
            <person name="Lomeli R."/>
            <person name="Scara G."/>
            <person name="Ko A."/>
            <person name="Delaney K."/>
            <person name="Wissotski M."/>
            <person name="Lopez G."/>
            <person name="Campos D."/>
            <person name="Braidotti M."/>
            <person name="Ashley E."/>
            <person name="Golser W."/>
            <person name="Kim H."/>
            <person name="Lee S."/>
            <person name="Lin J."/>
            <person name="Dujmic Z."/>
            <person name="Kim W."/>
            <person name="Talag J."/>
            <person name="Zuccolo A."/>
            <person name="Fan C."/>
            <person name="Sebastian A."/>
            <person name="Kramer M."/>
            <person name="Spiegel L."/>
            <person name="Nascimento L."/>
            <person name="Zutavern T."/>
            <person name="Miller B."/>
            <person name="Ambroise C."/>
            <person name="Muller S."/>
            <person name="Spooner W."/>
            <person name="Narechania A."/>
            <person name="Ren L."/>
            <person name="Wei S."/>
            <person name="Kumari S."/>
            <person name="Faga B."/>
            <person name="Levy M.J."/>
            <person name="McMahan L."/>
            <person name="Van Buren P."/>
            <person name="Vaughn M.W."/>
            <person name="Ying K."/>
            <person name="Yeh C.-T."/>
            <person name="Emrich S.J."/>
            <person name="Jia Y."/>
            <person name="Kalyanaraman A."/>
            <person name="Hsia A.-P."/>
            <person name="Barbazuk W.B."/>
            <person name="Baucom R.S."/>
            <person name="Brutnell T.P."/>
            <person name="Carpita N.C."/>
            <person name="Chaparro C."/>
            <person name="Chia J.-M."/>
            <person name="Deragon J.-M."/>
            <person name="Estill J.C."/>
            <person name="Fu Y."/>
            <person name="Jeddeloh J.A."/>
            <person name="Han Y."/>
            <person name="Lee H."/>
            <person name="Li P."/>
            <person name="Lisch D.R."/>
            <person name="Liu S."/>
            <person name="Liu Z."/>
            <person name="Nagel D.H."/>
            <person name="McCann M.C."/>
            <person name="SanMiguel P."/>
            <person name="Myers A.M."/>
            <person name="Nettleton D."/>
            <person name="Nguyen J."/>
            <person name="Penning B.W."/>
            <person name="Ponnala L."/>
            <person name="Schneider K.L."/>
            <person name="Schwartz D.C."/>
            <person name="Sharma A."/>
            <person name="Soderlund C."/>
            <person name="Springer N.M."/>
            <person name="Sun Q."/>
            <person name="Wang H."/>
            <person name="Waterman M."/>
            <person name="Westerman R."/>
            <person name="Wolfgruber T.K."/>
            <person name="Yang L."/>
            <person name="Yu Y."/>
            <person name="Zhang L."/>
            <person name="Zhou S."/>
            <person name="Zhu Q."/>
            <person name="Bennetzen J.L."/>
            <person name="Dawe R.K."/>
            <person name="Jiang J."/>
            <person name="Jiang N."/>
            <person name="Presting G.G."/>
            <person name="Wessler S.R."/>
            <person name="Aluru S."/>
            <person name="Martienssen R.A."/>
            <person name="Clifton S.W."/>
            <person name="McCombie W.R."/>
            <person name="Wing R.A."/>
            <person name="Wilson R.K."/>
        </authorList>
    </citation>
    <scope>NUCLEOTIDE SEQUENCE [LARGE SCALE GENOMIC DNA]</scope>
    <source>
        <strain>cv. B73</strain>
        <tissue>Seedling</tissue>
    </source>
</reference>
<reference key="2">
    <citation type="journal article" date="2009" name="PLoS Genet.">
        <title>Sequencing, mapping, and analysis of 27,455 maize full-length cDNAs.</title>
        <authorList>
            <person name="Soderlund C."/>
            <person name="Descour A."/>
            <person name="Kudrna D."/>
            <person name="Bomhoff M."/>
            <person name="Boyd L."/>
            <person name="Currie J."/>
            <person name="Angelova A."/>
            <person name="Collura K."/>
            <person name="Wissotski M."/>
            <person name="Ashley E."/>
            <person name="Morrow D."/>
            <person name="Fernandes J."/>
            <person name="Walbot V."/>
            <person name="Yu Y."/>
        </authorList>
    </citation>
    <scope>NUCLEOTIDE SEQUENCE [LARGE SCALE MRNA] OF 2-554</scope>
    <source>
        <strain>cv. B73</strain>
    </source>
</reference>
<reference key="3">
    <citation type="journal article" date="2016" name="Plant Cell">
        <title>Characterization of biosynthetic pathways for the production of the volatile homoterpenes DMNT and TMTT in Zea mays.</title>
        <authorList>
            <person name="Richter A."/>
            <person name="Schaff C."/>
            <person name="Zhang Z."/>
            <person name="Lipka A.E."/>
            <person name="Tian F."/>
            <person name="Koellner T.G."/>
            <person name="Schnee C."/>
            <person name="Preiss S."/>
            <person name="Irmisch S."/>
            <person name="Jander G."/>
            <person name="Boland W."/>
            <person name="Gershenzon J."/>
            <person name="Buckler E.S."/>
            <person name="Degenhardt J."/>
        </authorList>
    </citation>
    <scope>FUNCTION</scope>
    <scope>CATALYTIC ACTIVITY</scope>
    <scope>BIOPHYSICOCHEMICAL PROPERTIES</scope>
    <scope>INDUCTION BY HERBIVORES</scope>
    <source>
        <strain>cv. B73</strain>
    </source>
</reference>
<reference key="4">
    <citation type="journal article" date="2019" name="Planta">
        <title>Biosynthesis and function of terpenoid defense compounds in maize (Zea mays).</title>
        <authorList>
            <person name="Block A.K."/>
            <person name="Vaughan M.M."/>
            <person name="Schmelz E.A."/>
            <person name="Christensen S.A."/>
        </authorList>
    </citation>
    <scope>REVIEW</scope>
</reference>
<proteinExistence type="evidence at protein level"/>
<protein>
    <recommendedName>
        <fullName evidence="4">Trimethyltridecatetraene synthase</fullName>
        <ecNumber evidence="3">1.14.14.58</ecNumber>
    </recommendedName>
    <alternativeName>
        <fullName evidence="8">Cytochrome P-450 20</fullName>
    </alternativeName>
    <alternativeName>
        <fullName evidence="4">Cytochrome P450 92C6</fullName>
    </alternativeName>
</protein>
<name>C92C6_MAIZE</name>
<comment type="function">
    <text evidence="3 5">Component of the volatile terpenes biosynthesis pathways (PubMed:30187155). Converts mainly geranyllinalool to trimethyltridecatetraene (TMTT) (PubMed:27662898).</text>
</comment>
<comment type="catalytic activity">
    <reaction evidence="3">
        <text>(6E,10E)-geranyllinalool + reduced [NADPH--hemoprotein reductase] + O2 = (3E,7E)-4,8,12-trimethyltrideca 1,3,7,11-tetraene + but-3-en-2-one + oxidized [NADPH--hemoprotein reductase] + 2 H2O + H(+)</text>
        <dbReference type="Rhea" id="RHEA:13545"/>
        <dbReference type="Rhea" id="RHEA-COMP:11964"/>
        <dbReference type="Rhea" id="RHEA-COMP:11965"/>
        <dbReference type="ChEBI" id="CHEBI:15377"/>
        <dbReference type="ChEBI" id="CHEBI:15378"/>
        <dbReference type="ChEBI" id="CHEBI:15379"/>
        <dbReference type="ChEBI" id="CHEBI:48058"/>
        <dbReference type="ChEBI" id="CHEBI:57618"/>
        <dbReference type="ChEBI" id="CHEBI:58210"/>
        <dbReference type="ChEBI" id="CHEBI:74299"/>
        <dbReference type="ChEBI" id="CHEBI:74322"/>
        <dbReference type="EC" id="1.14.14.58"/>
    </reaction>
    <physiologicalReaction direction="left-to-right" evidence="3">
        <dbReference type="Rhea" id="RHEA:13546"/>
    </physiologicalReaction>
</comment>
<comment type="cofactor">
    <cofactor evidence="1">
        <name>heme</name>
        <dbReference type="ChEBI" id="CHEBI:30413"/>
    </cofactor>
</comment>
<comment type="biophysicochemical properties">
    <kinetics>
        <KM evidence="3">10.4 uM for (6E,10E)-geranyllinalool</KM>
    </kinetics>
</comment>
<comment type="pathway">
    <text evidence="7">Secondary metabolite biosynthesis; terpenoid biosynthesis.</text>
</comment>
<comment type="subcellular location">
    <subcellularLocation>
        <location evidence="2">Membrane</location>
        <topology evidence="2">Single-pass membrane protein</topology>
    </subcellularLocation>
</comment>
<comment type="induction">
    <text evidence="3">Strongly induced in response to herbivory-mediated wounding.</text>
</comment>
<comment type="similarity">
    <text evidence="6">Belongs to the cytochrome P450 family.</text>
</comment>
<comment type="sequence caution" evidence="6">
    <conflict type="erroneous initiation">
        <sequence resource="EMBL-CDS" id="ACF85239"/>
    </conflict>
    <text>Truncated N-terminus.</text>
</comment>
<comment type="sequence caution" evidence="6">
    <conflict type="erroneous initiation">
        <sequence resource="EMBL-CDS" id="ACL53859"/>
    </conflict>
    <text>Truncated N-terminus.</text>
</comment>
<comment type="sequence caution" evidence="6">
    <conflict type="erroneous initiation">
        <sequence resource="EMBL-CDS" id="ACR36247"/>
    </conflict>
    <text>Truncated N-terminus.</text>
</comment>
<dbReference type="EC" id="1.14.14.58" evidence="3"/>
<dbReference type="EMBL" id="CM007648">
    <property type="protein sequence ID" value="ONM27923.1"/>
    <property type="molecule type" value="Genomic_DNA"/>
</dbReference>
<dbReference type="EMBL" id="BT040234">
    <property type="protein sequence ID" value="ACF85239.1"/>
    <property type="status" value="ALT_INIT"/>
    <property type="molecule type" value="mRNA"/>
</dbReference>
<dbReference type="EMBL" id="BT055252">
    <property type="protein sequence ID" value="ACL53859.1"/>
    <property type="status" value="ALT_INIT"/>
    <property type="molecule type" value="mRNA"/>
</dbReference>
<dbReference type="EMBL" id="BT085894">
    <property type="protein sequence ID" value="ACR36247.1"/>
    <property type="status" value="ALT_INIT"/>
    <property type="molecule type" value="mRNA"/>
</dbReference>
<dbReference type="RefSeq" id="NP_001146388.2">
    <property type="nucleotide sequence ID" value="NM_001152916.2"/>
</dbReference>
<dbReference type="SMR" id="A0A1D6F9Y9"/>
<dbReference type="STRING" id="4577.A0A1D6F9Y9"/>
<dbReference type="PaxDb" id="4577-GRMZM2G139467_P01"/>
<dbReference type="GeneID" id="100279968"/>
<dbReference type="KEGG" id="zma:100279968"/>
<dbReference type="MaizeGDB" id="9035643"/>
<dbReference type="eggNOG" id="KOG0156">
    <property type="taxonomic scope" value="Eukaryota"/>
</dbReference>
<dbReference type="InParanoid" id="A0A1D6F9Y9"/>
<dbReference type="OMA" id="LCGTELF"/>
<dbReference type="OrthoDB" id="1055148at2759"/>
<dbReference type="BRENDA" id="1.14.14.58">
    <property type="organism ID" value="6752"/>
</dbReference>
<dbReference type="SABIO-RK" id="A0A1D6F9Y9"/>
<dbReference type="UniPathway" id="UPA00213"/>
<dbReference type="Proteomes" id="UP000007305">
    <property type="component" value="Unplaced"/>
</dbReference>
<dbReference type="ExpressionAtlas" id="A0A1D6F9Y9">
    <property type="expression patterns" value="baseline and differential"/>
</dbReference>
<dbReference type="GO" id="GO:0016020">
    <property type="term" value="C:membrane"/>
    <property type="evidence" value="ECO:0007669"/>
    <property type="project" value="UniProtKB-SubCell"/>
</dbReference>
<dbReference type="GO" id="GO:0097007">
    <property type="term" value="F:4,8,12-trimethyltrideca-1,3,7,11-tetraene synthase activity"/>
    <property type="evidence" value="ECO:0007669"/>
    <property type="project" value="RHEA"/>
</dbReference>
<dbReference type="GO" id="GO:0020037">
    <property type="term" value="F:heme binding"/>
    <property type="evidence" value="ECO:0007669"/>
    <property type="project" value="InterPro"/>
</dbReference>
<dbReference type="GO" id="GO:0005506">
    <property type="term" value="F:iron ion binding"/>
    <property type="evidence" value="ECO:0007669"/>
    <property type="project" value="InterPro"/>
</dbReference>
<dbReference type="GO" id="GO:0010333">
    <property type="term" value="F:terpene synthase activity"/>
    <property type="evidence" value="ECO:0000314"/>
    <property type="project" value="UniProtKB"/>
</dbReference>
<dbReference type="GO" id="GO:0080027">
    <property type="term" value="P:response to herbivore"/>
    <property type="evidence" value="ECO:0000270"/>
    <property type="project" value="UniProtKB"/>
</dbReference>
<dbReference type="GO" id="GO:0016114">
    <property type="term" value="P:terpenoid biosynthetic process"/>
    <property type="evidence" value="ECO:0000314"/>
    <property type="project" value="UniProtKB"/>
</dbReference>
<dbReference type="CDD" id="cd20618">
    <property type="entry name" value="CYP71_clan"/>
    <property type="match status" value="1"/>
</dbReference>
<dbReference type="FunFam" id="1.10.630.10:FF:000097">
    <property type="entry name" value="Cytochrome P-450 19"/>
    <property type="match status" value="1"/>
</dbReference>
<dbReference type="Gene3D" id="1.10.630.10">
    <property type="entry name" value="Cytochrome P450"/>
    <property type="match status" value="1"/>
</dbReference>
<dbReference type="InterPro" id="IPR001128">
    <property type="entry name" value="Cyt_P450"/>
</dbReference>
<dbReference type="InterPro" id="IPR017972">
    <property type="entry name" value="Cyt_P450_CS"/>
</dbReference>
<dbReference type="InterPro" id="IPR002401">
    <property type="entry name" value="Cyt_P450_E_grp-I"/>
</dbReference>
<dbReference type="InterPro" id="IPR036396">
    <property type="entry name" value="Cyt_P450_sf"/>
</dbReference>
<dbReference type="PANTHER" id="PTHR47944">
    <property type="entry name" value="CYTOCHROME P450 98A9"/>
    <property type="match status" value="1"/>
</dbReference>
<dbReference type="PANTHER" id="PTHR47944:SF3">
    <property type="entry name" value="TRIMETHYLTRIDECATETRAENE SYNTHASE"/>
    <property type="match status" value="1"/>
</dbReference>
<dbReference type="Pfam" id="PF00067">
    <property type="entry name" value="p450"/>
    <property type="match status" value="1"/>
</dbReference>
<dbReference type="PRINTS" id="PR00463">
    <property type="entry name" value="EP450I"/>
</dbReference>
<dbReference type="PRINTS" id="PR00385">
    <property type="entry name" value="P450"/>
</dbReference>
<dbReference type="SUPFAM" id="SSF48264">
    <property type="entry name" value="Cytochrome P450"/>
    <property type="match status" value="1"/>
</dbReference>
<dbReference type="PROSITE" id="PS00086">
    <property type="entry name" value="CYTOCHROME_P450"/>
    <property type="match status" value="1"/>
</dbReference>